<feature type="chain" id="PRO_0000263676" description="Cytochrome c oxidase assembly protein COX14">
    <location>
        <begin position="1"/>
        <end position="57"/>
    </location>
</feature>
<feature type="topological domain" description="Mitochondrial intermembrane" evidence="3">
    <location>
        <begin position="1"/>
        <end position="14"/>
    </location>
</feature>
<feature type="transmembrane region" description="Helical" evidence="2">
    <location>
        <begin position="15"/>
        <end position="37"/>
    </location>
</feature>
<feature type="topological domain" description="Cytoplasmic" evidence="3">
    <location>
        <begin position="38"/>
        <end position="57"/>
    </location>
</feature>
<organism>
    <name type="scientific">Bos taurus</name>
    <name type="common">Bovine</name>
    <dbReference type="NCBI Taxonomy" id="9913"/>
    <lineage>
        <taxon>Eukaryota</taxon>
        <taxon>Metazoa</taxon>
        <taxon>Chordata</taxon>
        <taxon>Craniata</taxon>
        <taxon>Vertebrata</taxon>
        <taxon>Euteleostomi</taxon>
        <taxon>Mammalia</taxon>
        <taxon>Eutheria</taxon>
        <taxon>Laurasiatheria</taxon>
        <taxon>Artiodactyla</taxon>
        <taxon>Ruminantia</taxon>
        <taxon>Pecora</taxon>
        <taxon>Bovidae</taxon>
        <taxon>Bovinae</taxon>
        <taxon>Bos</taxon>
    </lineage>
</organism>
<proteinExistence type="inferred from homology"/>
<keyword id="KW-0472">Membrane</keyword>
<keyword id="KW-0496">Mitochondrion</keyword>
<keyword id="KW-1000">Mitochondrion outer membrane</keyword>
<keyword id="KW-1185">Reference proteome</keyword>
<keyword id="KW-0812">Transmembrane</keyword>
<keyword id="KW-1133">Transmembrane helix</keyword>
<name>COX14_BOVIN</name>
<sequence length="57" mass="6470">MPTAKQLADIGYKTFSTSMMLLTVYGGYLCSVRAYHYFQRRSSRRQAAEEQKTSGAL</sequence>
<gene>
    <name type="primary">COX14</name>
</gene>
<reference key="1">
    <citation type="submission" date="2006-04" db="EMBL/GenBank/DDBJ databases">
        <authorList>
            <consortium name="NIH - Mammalian Gene Collection (MGC) project"/>
        </authorList>
    </citation>
    <scope>NUCLEOTIDE SEQUENCE [LARGE SCALE MRNA]</scope>
    <source>
        <strain>Hereford</strain>
        <tissue>Fetal skin</tissue>
    </source>
</reference>
<dbReference type="EMBL" id="BC114898">
    <property type="protein sequence ID" value="AAI14899.1"/>
    <property type="molecule type" value="mRNA"/>
</dbReference>
<dbReference type="RefSeq" id="NP_001181993.1">
    <property type="nucleotide sequence ID" value="NM_001195064.1"/>
</dbReference>
<dbReference type="RefSeq" id="XP_005206389.1">
    <property type="nucleotide sequence ID" value="XM_005206332.3"/>
</dbReference>
<dbReference type="RefSeq" id="XP_010803296.1">
    <property type="nucleotide sequence ID" value="XM_010804994.4"/>
</dbReference>
<dbReference type="RefSeq" id="XP_015326481.1">
    <property type="nucleotide sequence ID" value="XM_015470995.1"/>
</dbReference>
<dbReference type="RefSeq" id="XP_015326482.1">
    <property type="nucleotide sequence ID" value="XM_015470996.1"/>
</dbReference>
<dbReference type="RefSeq" id="XP_015326483.1">
    <property type="nucleotide sequence ID" value="XM_015470997.1"/>
</dbReference>
<dbReference type="RefSeq" id="XP_024848036.1">
    <property type="nucleotide sequence ID" value="XM_024992268.2"/>
</dbReference>
<dbReference type="RefSeq" id="XP_024848039.1">
    <property type="nucleotide sequence ID" value="XM_024992271.2"/>
</dbReference>
<dbReference type="RefSeq" id="XP_059742753.1">
    <property type="nucleotide sequence ID" value="XM_059886770.1"/>
</dbReference>
<dbReference type="RefSeq" id="XP_059742754.1">
    <property type="nucleotide sequence ID" value="XM_059886771.1"/>
</dbReference>
<dbReference type="RefSeq" id="XP_059742755.1">
    <property type="nucleotide sequence ID" value="XM_059886772.1"/>
</dbReference>
<dbReference type="RefSeq" id="XP_059742756.1">
    <property type="nucleotide sequence ID" value="XM_059886773.1"/>
</dbReference>
<dbReference type="RefSeq" id="XP_059742757.1">
    <property type="nucleotide sequence ID" value="XM_059886774.1"/>
</dbReference>
<dbReference type="RefSeq" id="XP_059742758.1">
    <property type="nucleotide sequence ID" value="XM_059886775.1"/>
</dbReference>
<dbReference type="RefSeq" id="XP_059742759.1">
    <property type="nucleotide sequence ID" value="XM_059886776.1"/>
</dbReference>
<dbReference type="RefSeq" id="XP_059742760.1">
    <property type="nucleotide sequence ID" value="XM_059886777.1"/>
</dbReference>
<dbReference type="RefSeq" id="XP_059742761.1">
    <property type="nucleotide sequence ID" value="XM_059886778.1"/>
</dbReference>
<dbReference type="RefSeq" id="XP_059742762.1">
    <property type="nucleotide sequence ID" value="XM_059886779.1"/>
</dbReference>
<dbReference type="RefSeq" id="XP_059742763.1">
    <property type="nucleotide sequence ID" value="XM_059886780.1"/>
</dbReference>
<dbReference type="FunCoup" id="Q1RMH3">
    <property type="interactions" value="266"/>
</dbReference>
<dbReference type="STRING" id="9913.ENSBTAP00000001069"/>
<dbReference type="PaxDb" id="9913-ENSBTAP00000001069"/>
<dbReference type="GeneID" id="768048"/>
<dbReference type="KEGG" id="bta:768048"/>
<dbReference type="CTD" id="84987"/>
<dbReference type="VEuPathDB" id="HostDB:ENSBTAG00000000808"/>
<dbReference type="eggNOG" id="ENOG502SCZ6">
    <property type="taxonomic scope" value="Eukaryota"/>
</dbReference>
<dbReference type="HOGENOM" id="CLU_209431_0_0_1"/>
<dbReference type="InParanoid" id="Q1RMH3"/>
<dbReference type="OMA" id="VYHYFQR"/>
<dbReference type="OrthoDB" id="9928108at2759"/>
<dbReference type="TreeFam" id="TF338398"/>
<dbReference type="Reactome" id="R-BTA-9864848">
    <property type="pathway name" value="Complex IV assembly"/>
</dbReference>
<dbReference type="Proteomes" id="UP000009136">
    <property type="component" value="Chromosome 5"/>
</dbReference>
<dbReference type="Bgee" id="ENSBTAG00000000808">
    <property type="expression patterns" value="Expressed in diaphragm and 104 other cell types or tissues"/>
</dbReference>
<dbReference type="GO" id="GO:0005741">
    <property type="term" value="C:mitochondrial outer membrane"/>
    <property type="evidence" value="ECO:0000250"/>
    <property type="project" value="UniProtKB"/>
</dbReference>
<dbReference type="GO" id="GO:0005739">
    <property type="term" value="C:mitochondrion"/>
    <property type="evidence" value="ECO:0000250"/>
    <property type="project" value="UniProtKB"/>
</dbReference>
<dbReference type="GO" id="GO:0033617">
    <property type="term" value="P:mitochondrial cytochrome c oxidase assembly"/>
    <property type="evidence" value="ECO:0000250"/>
    <property type="project" value="UniProtKB"/>
</dbReference>
<dbReference type="InterPro" id="IPR029208">
    <property type="entry name" value="COX14"/>
</dbReference>
<dbReference type="PANTHER" id="PTHR36684">
    <property type="entry name" value="CYTOCHROME C OXIDASE ASSEMBLY PROTEIN COX14"/>
    <property type="match status" value="1"/>
</dbReference>
<dbReference type="PANTHER" id="PTHR36684:SF1">
    <property type="entry name" value="CYTOCHROME C OXIDASE ASSEMBLY PROTEIN COX14"/>
    <property type="match status" value="1"/>
</dbReference>
<dbReference type="Pfam" id="PF14880">
    <property type="entry name" value="COX14"/>
    <property type="match status" value="1"/>
</dbReference>
<evidence type="ECO:0000250" key="1">
    <source>
        <dbReference type="UniProtKB" id="Q96I36"/>
    </source>
</evidence>
<evidence type="ECO:0000255" key="2"/>
<evidence type="ECO:0000305" key="3"/>
<accession>Q1RMH3</accession>
<comment type="function">
    <text evidence="1">Core component of the MITRAC (mitochondrial translation regulation assembly intermediate of cytochrome c oxidase complex) complex, that regulates cytochrome c oxidase assembly. Requires for coordination of the early steps of cytochrome c oxidase assembly with the synthesis of MT-CO1.</text>
</comment>
<comment type="subunit">
    <text evidence="1">Along with COA3, core component of the MITRAC (mitochondrial translation regulation assembly intermediate of cytochrome c oxidase complex) complex.</text>
</comment>
<comment type="subcellular location">
    <subcellularLocation>
        <location evidence="1">Mitochondrion outer membrane</location>
        <topology evidence="2">Single-pass membrane protein</topology>
    </subcellularLocation>
</comment>
<protein>
    <recommendedName>
        <fullName>Cytochrome c oxidase assembly protein COX14</fullName>
    </recommendedName>
</protein>